<organism>
    <name type="scientific">Hahella chejuensis (strain KCTC 2396)</name>
    <dbReference type="NCBI Taxonomy" id="349521"/>
    <lineage>
        <taxon>Bacteria</taxon>
        <taxon>Pseudomonadati</taxon>
        <taxon>Pseudomonadota</taxon>
        <taxon>Gammaproteobacteria</taxon>
        <taxon>Oceanospirillales</taxon>
        <taxon>Hahellaceae</taxon>
        <taxon>Hahella</taxon>
    </lineage>
</organism>
<name>ALR_HAHCH</name>
<evidence type="ECO:0000255" key="1">
    <source>
        <dbReference type="HAMAP-Rule" id="MF_01201"/>
    </source>
</evidence>
<feature type="chain" id="PRO_1000065991" description="Alanine racemase">
    <location>
        <begin position="1"/>
        <end position="374"/>
    </location>
</feature>
<feature type="active site" description="Proton acceptor; specific for D-alanine" evidence="1">
    <location>
        <position position="34"/>
    </location>
</feature>
<feature type="active site" description="Proton acceptor; specific for L-alanine" evidence="1">
    <location>
        <position position="265"/>
    </location>
</feature>
<feature type="binding site" evidence="1">
    <location>
        <position position="138"/>
    </location>
    <ligand>
        <name>substrate</name>
    </ligand>
</feature>
<feature type="binding site" evidence="1">
    <location>
        <position position="313"/>
    </location>
    <ligand>
        <name>substrate</name>
    </ligand>
</feature>
<feature type="modified residue" description="N6-(pyridoxal phosphate)lysine" evidence="1">
    <location>
        <position position="34"/>
    </location>
</feature>
<comment type="function">
    <text evidence="1">Catalyzes the interconversion of L-alanine and D-alanine. May also act on other amino acids.</text>
</comment>
<comment type="catalytic activity">
    <reaction evidence="1">
        <text>L-alanine = D-alanine</text>
        <dbReference type="Rhea" id="RHEA:20249"/>
        <dbReference type="ChEBI" id="CHEBI:57416"/>
        <dbReference type="ChEBI" id="CHEBI:57972"/>
        <dbReference type="EC" id="5.1.1.1"/>
    </reaction>
</comment>
<comment type="cofactor">
    <cofactor evidence="1">
        <name>pyridoxal 5'-phosphate</name>
        <dbReference type="ChEBI" id="CHEBI:597326"/>
    </cofactor>
</comment>
<comment type="pathway">
    <text evidence="1">Amino-acid biosynthesis; D-alanine biosynthesis; D-alanine from L-alanine: step 1/1.</text>
</comment>
<comment type="similarity">
    <text evidence="1">Belongs to the alanine racemase family.</text>
</comment>
<proteinExistence type="inferred from homology"/>
<gene>
    <name type="primary">alr</name>
    <name type="ordered locus">HCH_01715</name>
</gene>
<accession>Q2SLB1</accession>
<reference key="1">
    <citation type="journal article" date="2005" name="Nucleic Acids Res.">
        <title>Genomic blueprint of Hahella chejuensis, a marine microbe producing an algicidal agent.</title>
        <authorList>
            <person name="Jeong H."/>
            <person name="Yim J.H."/>
            <person name="Lee C."/>
            <person name="Choi S.-H."/>
            <person name="Park Y.K."/>
            <person name="Yoon S.H."/>
            <person name="Hur C.-G."/>
            <person name="Kang H.-Y."/>
            <person name="Kim D."/>
            <person name="Lee H.H."/>
            <person name="Park K.H."/>
            <person name="Park S.-H."/>
            <person name="Park H.-S."/>
            <person name="Lee H.K."/>
            <person name="Oh T.K."/>
            <person name="Kim J.F."/>
        </authorList>
    </citation>
    <scope>NUCLEOTIDE SEQUENCE [LARGE SCALE GENOMIC DNA]</scope>
    <source>
        <strain>KCTC 2396</strain>
    </source>
</reference>
<dbReference type="EC" id="5.1.1.1" evidence="1"/>
<dbReference type="EMBL" id="CP000155">
    <property type="protein sequence ID" value="ABC28563.1"/>
    <property type="molecule type" value="Genomic_DNA"/>
</dbReference>
<dbReference type="RefSeq" id="WP_011395635.1">
    <property type="nucleotide sequence ID" value="NC_007645.1"/>
</dbReference>
<dbReference type="SMR" id="Q2SLB1"/>
<dbReference type="STRING" id="349521.HCH_01715"/>
<dbReference type="KEGG" id="hch:HCH_01715"/>
<dbReference type="eggNOG" id="COG0787">
    <property type="taxonomic scope" value="Bacteria"/>
</dbReference>
<dbReference type="HOGENOM" id="CLU_028393_1_0_6"/>
<dbReference type="OrthoDB" id="9813814at2"/>
<dbReference type="UniPathway" id="UPA00042">
    <property type="reaction ID" value="UER00497"/>
</dbReference>
<dbReference type="Proteomes" id="UP000000238">
    <property type="component" value="Chromosome"/>
</dbReference>
<dbReference type="GO" id="GO:0005829">
    <property type="term" value="C:cytosol"/>
    <property type="evidence" value="ECO:0007669"/>
    <property type="project" value="TreeGrafter"/>
</dbReference>
<dbReference type="GO" id="GO:0008784">
    <property type="term" value="F:alanine racemase activity"/>
    <property type="evidence" value="ECO:0007669"/>
    <property type="project" value="UniProtKB-UniRule"/>
</dbReference>
<dbReference type="GO" id="GO:0030170">
    <property type="term" value="F:pyridoxal phosphate binding"/>
    <property type="evidence" value="ECO:0007669"/>
    <property type="project" value="UniProtKB-UniRule"/>
</dbReference>
<dbReference type="GO" id="GO:0030632">
    <property type="term" value="P:D-alanine biosynthetic process"/>
    <property type="evidence" value="ECO:0007669"/>
    <property type="project" value="UniProtKB-UniRule"/>
</dbReference>
<dbReference type="CDD" id="cd06827">
    <property type="entry name" value="PLPDE_III_AR_proteobact"/>
    <property type="match status" value="1"/>
</dbReference>
<dbReference type="FunFam" id="3.20.20.10:FF:000002">
    <property type="entry name" value="Alanine racemase"/>
    <property type="match status" value="1"/>
</dbReference>
<dbReference type="Gene3D" id="3.20.20.10">
    <property type="entry name" value="Alanine racemase"/>
    <property type="match status" value="1"/>
</dbReference>
<dbReference type="Gene3D" id="2.40.37.10">
    <property type="entry name" value="Lyase, Ornithine Decarboxylase, Chain A, domain 1"/>
    <property type="match status" value="1"/>
</dbReference>
<dbReference type="HAMAP" id="MF_01201">
    <property type="entry name" value="Ala_racemase"/>
    <property type="match status" value="1"/>
</dbReference>
<dbReference type="InterPro" id="IPR000821">
    <property type="entry name" value="Ala_racemase"/>
</dbReference>
<dbReference type="InterPro" id="IPR009006">
    <property type="entry name" value="Ala_racemase/Decarboxylase_C"/>
</dbReference>
<dbReference type="InterPro" id="IPR011079">
    <property type="entry name" value="Ala_racemase_C"/>
</dbReference>
<dbReference type="InterPro" id="IPR001608">
    <property type="entry name" value="Ala_racemase_N"/>
</dbReference>
<dbReference type="InterPro" id="IPR020622">
    <property type="entry name" value="Ala_racemase_pyridoxalP-BS"/>
</dbReference>
<dbReference type="InterPro" id="IPR029066">
    <property type="entry name" value="PLP-binding_barrel"/>
</dbReference>
<dbReference type="NCBIfam" id="TIGR00492">
    <property type="entry name" value="alr"/>
    <property type="match status" value="1"/>
</dbReference>
<dbReference type="PANTHER" id="PTHR30511">
    <property type="entry name" value="ALANINE RACEMASE"/>
    <property type="match status" value="1"/>
</dbReference>
<dbReference type="PANTHER" id="PTHR30511:SF0">
    <property type="entry name" value="ALANINE RACEMASE, CATABOLIC-RELATED"/>
    <property type="match status" value="1"/>
</dbReference>
<dbReference type="Pfam" id="PF00842">
    <property type="entry name" value="Ala_racemase_C"/>
    <property type="match status" value="1"/>
</dbReference>
<dbReference type="Pfam" id="PF01168">
    <property type="entry name" value="Ala_racemase_N"/>
    <property type="match status" value="1"/>
</dbReference>
<dbReference type="PRINTS" id="PR00992">
    <property type="entry name" value="ALARACEMASE"/>
</dbReference>
<dbReference type="SMART" id="SM01005">
    <property type="entry name" value="Ala_racemase_C"/>
    <property type="match status" value="1"/>
</dbReference>
<dbReference type="SUPFAM" id="SSF50621">
    <property type="entry name" value="Alanine racemase C-terminal domain-like"/>
    <property type="match status" value="1"/>
</dbReference>
<dbReference type="SUPFAM" id="SSF51419">
    <property type="entry name" value="PLP-binding barrel"/>
    <property type="match status" value="1"/>
</dbReference>
<dbReference type="PROSITE" id="PS00395">
    <property type="entry name" value="ALANINE_RACEMASE"/>
    <property type="match status" value="1"/>
</dbReference>
<protein>
    <recommendedName>
        <fullName evidence="1">Alanine racemase</fullName>
        <ecNumber evidence="1">5.1.1.1</ecNumber>
    </recommendedName>
</protein>
<sequence length="374" mass="40590">MRPSRALIDLDALRHNIRLLNSIAHNARCAAVIKADAYGHGAVEIARALKGEAPKLAVACYDEAVSLREAGVTTPLLVLEGFYSSEELADSTRWCDIEWVVHDMEQLDMLSEVAPLRKAGPDSTRMQTWIKLNTGMNRLGLPLNKLAHVAEKLQQFPGLSVIGLMTHFACADELDSLLQQRQWRAFQAGMQAAGANGWSYSSANSAALLQYPETHLDWVRPGIAMYGASPMADKTGADFGLKPVMTFESRLIATRELQAGDSIGYGAAWTADAPTRMGVVAVGYGDGYPRQMQNGAPVAVCGKRTKIIGRVSMDMLTVDISHIPEARIGSEVELWGGTVSADEVAGYASTISYTLFTGMTSRVPRVYINRSEVV</sequence>
<keyword id="KW-0413">Isomerase</keyword>
<keyword id="KW-0663">Pyridoxal phosphate</keyword>
<keyword id="KW-1185">Reference proteome</keyword>